<comment type="function">
    <text>Catalyzes the oxidation of uric acid to 5-hydroxyisourate, which is further processed to form (S)-allantoin.</text>
</comment>
<comment type="catalytic activity">
    <reaction>
        <text>urate + O2 + H2O = 5-hydroxyisourate + H2O2</text>
        <dbReference type="Rhea" id="RHEA:21368"/>
        <dbReference type="ChEBI" id="CHEBI:15377"/>
        <dbReference type="ChEBI" id="CHEBI:15379"/>
        <dbReference type="ChEBI" id="CHEBI:16240"/>
        <dbReference type="ChEBI" id="CHEBI:17775"/>
        <dbReference type="ChEBI" id="CHEBI:18072"/>
        <dbReference type="EC" id="1.7.3.3"/>
    </reaction>
</comment>
<comment type="pathway">
    <text>Purine metabolism; urate degradation; (S)-allantoin from urate: step 1/3.</text>
</comment>
<comment type="subcellular location">
    <subcellularLocation>
        <location>Peroxisome</location>
    </subcellularLocation>
</comment>
<comment type="similarity">
    <text evidence="5">Belongs to the uricase family.</text>
</comment>
<reference key="1">
    <citation type="journal article" date="1989" name="Biochim. Biophys. Acta">
        <title>Cloning of rabbit uricase cDNA reveals a conserved carboxy-terminal tripeptide in three species.</title>
        <authorList>
            <person name="Motojima K."/>
            <person name="Goto S."/>
        </authorList>
    </citation>
    <scope>NUCLEOTIDE SEQUENCE [MRNA]</scope>
</reference>
<reference key="2">
    <citation type="journal article" date="1990" name="FEBS Lett.">
        <title>Two rabbit uricase mRNAs and their tissue-specific expression.</title>
        <authorList>
            <person name="Motojima K."/>
            <person name="Goto S."/>
        </authorList>
    </citation>
    <scope>NUCLEOTIDE SEQUENCE [MRNA] OF 1-35</scope>
</reference>
<name>URIC_RABIT</name>
<gene>
    <name type="primary">UOX</name>
</gene>
<proteinExistence type="evidence at transcript level"/>
<protein>
    <recommendedName>
        <fullName>Uricase</fullName>
        <ecNumber>1.7.3.3</ecNumber>
    </recommendedName>
    <alternativeName>
        <fullName>Urate oxidase</fullName>
    </alternativeName>
</protein>
<dbReference type="EC" id="1.7.3.3"/>
<dbReference type="EMBL" id="X14522">
    <property type="protein sequence ID" value="CAA32664.1"/>
    <property type="molecule type" value="mRNA"/>
</dbReference>
<dbReference type="EMBL" id="X57776">
    <property type="protein sequence ID" value="CAA40922.1"/>
    <property type="molecule type" value="mRNA"/>
</dbReference>
<dbReference type="EMBL" id="X57777">
    <property type="protein sequence ID" value="CAA40923.1"/>
    <property type="molecule type" value="mRNA"/>
</dbReference>
<dbReference type="PIR" id="S04332">
    <property type="entry name" value="S04332"/>
</dbReference>
<dbReference type="RefSeq" id="NP_001121545.1">
    <property type="nucleotide sequence ID" value="NM_001128073.1"/>
</dbReference>
<dbReference type="SMR" id="P11645"/>
<dbReference type="FunCoup" id="P11645">
    <property type="interactions" value="271"/>
</dbReference>
<dbReference type="STRING" id="9986.ENSOCUP00000049580"/>
<dbReference type="PaxDb" id="9986-ENSOCUP00000019291"/>
<dbReference type="GeneID" id="100009266"/>
<dbReference type="KEGG" id="ocu:100009266"/>
<dbReference type="eggNOG" id="KOG1599">
    <property type="taxonomic scope" value="Eukaryota"/>
</dbReference>
<dbReference type="InParanoid" id="P11645"/>
<dbReference type="OrthoDB" id="9992118at2759"/>
<dbReference type="UniPathway" id="UPA00394">
    <property type="reaction ID" value="UER00650"/>
</dbReference>
<dbReference type="Proteomes" id="UP000001811">
    <property type="component" value="Unplaced"/>
</dbReference>
<dbReference type="GO" id="GO:0005777">
    <property type="term" value="C:peroxisome"/>
    <property type="evidence" value="ECO:0007669"/>
    <property type="project" value="UniProtKB-SubCell"/>
</dbReference>
<dbReference type="GO" id="GO:0004846">
    <property type="term" value="F:urate oxidase activity"/>
    <property type="evidence" value="ECO:0007669"/>
    <property type="project" value="UniProtKB-EC"/>
</dbReference>
<dbReference type="GO" id="GO:0006145">
    <property type="term" value="P:purine nucleobase catabolic process"/>
    <property type="evidence" value="ECO:0007669"/>
    <property type="project" value="TreeGrafter"/>
</dbReference>
<dbReference type="GO" id="GO:0019628">
    <property type="term" value="P:urate catabolic process"/>
    <property type="evidence" value="ECO:0007669"/>
    <property type="project" value="UniProtKB-UniPathway"/>
</dbReference>
<dbReference type="CDD" id="cd00445">
    <property type="entry name" value="Uricase"/>
    <property type="match status" value="1"/>
</dbReference>
<dbReference type="FunFam" id="3.10.270.10:FF:000001">
    <property type="entry name" value="Uricase"/>
    <property type="match status" value="1"/>
</dbReference>
<dbReference type="Gene3D" id="3.10.270.10">
    <property type="entry name" value="Urate Oxidase"/>
    <property type="match status" value="1"/>
</dbReference>
<dbReference type="InterPro" id="IPR002042">
    <property type="entry name" value="Uricase"/>
</dbReference>
<dbReference type="InterPro" id="IPR019842">
    <property type="entry name" value="Uricase_CS"/>
</dbReference>
<dbReference type="NCBIfam" id="TIGR03383">
    <property type="entry name" value="urate_oxi"/>
    <property type="match status" value="1"/>
</dbReference>
<dbReference type="PANTHER" id="PTHR42874">
    <property type="entry name" value="URICASE"/>
    <property type="match status" value="1"/>
</dbReference>
<dbReference type="PANTHER" id="PTHR42874:SF1">
    <property type="entry name" value="URICASE"/>
    <property type="match status" value="1"/>
</dbReference>
<dbReference type="Pfam" id="PF01014">
    <property type="entry name" value="Uricase"/>
    <property type="match status" value="2"/>
</dbReference>
<dbReference type="PIRSF" id="PIRSF000241">
    <property type="entry name" value="Urate_oxidase"/>
    <property type="match status" value="1"/>
</dbReference>
<dbReference type="PRINTS" id="PR00093">
    <property type="entry name" value="URICASE"/>
</dbReference>
<dbReference type="SUPFAM" id="SSF55620">
    <property type="entry name" value="Tetrahydrobiopterin biosynthesis enzymes-like"/>
    <property type="match status" value="2"/>
</dbReference>
<dbReference type="PROSITE" id="PS00366">
    <property type="entry name" value="URICASE"/>
    <property type="match status" value="1"/>
</dbReference>
<keyword id="KW-0007">Acetylation</keyword>
<keyword id="KW-0560">Oxidoreductase</keyword>
<keyword id="KW-0576">Peroxisome</keyword>
<keyword id="KW-0597">Phosphoprotein</keyword>
<keyword id="KW-0659">Purine metabolism</keyword>
<keyword id="KW-1185">Reference proteome</keyword>
<organism>
    <name type="scientific">Oryctolagus cuniculus</name>
    <name type="common">Rabbit</name>
    <dbReference type="NCBI Taxonomy" id="9986"/>
    <lineage>
        <taxon>Eukaryota</taxon>
        <taxon>Metazoa</taxon>
        <taxon>Chordata</taxon>
        <taxon>Craniata</taxon>
        <taxon>Vertebrata</taxon>
        <taxon>Euteleostomi</taxon>
        <taxon>Mammalia</taxon>
        <taxon>Eutheria</taxon>
        <taxon>Euarchontoglires</taxon>
        <taxon>Glires</taxon>
        <taxon>Lagomorpha</taxon>
        <taxon>Leporidae</taxon>
        <taxon>Oryctolagus</taxon>
    </lineage>
</organism>
<evidence type="ECO:0000250" key="1">
    <source>
        <dbReference type="UniProtKB" id="D0VWQ1"/>
    </source>
</evidence>
<evidence type="ECO:0000250" key="2">
    <source>
        <dbReference type="UniProtKB" id="P25688"/>
    </source>
</evidence>
<evidence type="ECO:0000250" key="3">
    <source>
        <dbReference type="UniProtKB" id="Q00511"/>
    </source>
</evidence>
<evidence type="ECO:0000255" key="4"/>
<evidence type="ECO:0000305" key="5"/>
<feature type="initiator methionine" description="Removed" evidence="2">
    <location>
        <position position="1"/>
    </location>
</feature>
<feature type="chain" id="PRO_0000165989" description="Uricase">
    <location>
        <begin position="2"/>
        <end position="300"/>
    </location>
</feature>
<feature type="short sequence motif" description="Microbody targeting signal" evidence="4">
    <location>
        <begin position="298"/>
        <end position="300"/>
    </location>
</feature>
<feature type="active site" description="Charge relay system" evidence="1">
    <location>
        <position position="19"/>
    </location>
</feature>
<feature type="active site" description="Charge relay system" evidence="1">
    <location>
        <position position="64"/>
    </location>
</feature>
<feature type="active site" description="Charge relay system" evidence="1">
    <location>
        <position position="260"/>
    </location>
</feature>
<feature type="binding site" evidence="3">
    <location>
        <position position="64"/>
    </location>
    <ligand>
        <name>urate</name>
        <dbReference type="ChEBI" id="CHEBI:17775"/>
    </ligand>
</feature>
<feature type="binding site" evidence="3">
    <location>
        <position position="65"/>
    </location>
    <ligand>
        <name>urate</name>
        <dbReference type="ChEBI" id="CHEBI:17775"/>
    </ligand>
</feature>
<feature type="binding site" evidence="3">
    <location>
        <position position="166"/>
    </location>
    <ligand>
        <name>urate</name>
        <dbReference type="ChEBI" id="CHEBI:17775"/>
    </ligand>
</feature>
<feature type="binding site" evidence="3">
    <location>
        <position position="183"/>
    </location>
    <ligand>
        <name>urate</name>
        <dbReference type="ChEBI" id="CHEBI:17775"/>
    </ligand>
</feature>
<feature type="binding site" evidence="3">
    <location>
        <position position="231"/>
    </location>
    <ligand>
        <name>urate</name>
        <dbReference type="ChEBI" id="CHEBI:17775"/>
    </ligand>
</feature>
<feature type="binding site" evidence="3">
    <location>
        <position position="232"/>
    </location>
    <ligand>
        <name>urate</name>
        <dbReference type="ChEBI" id="CHEBI:17775"/>
    </ligand>
</feature>
<feature type="binding site" evidence="3">
    <location>
        <position position="258"/>
    </location>
    <ligand>
        <name>urate</name>
        <dbReference type="ChEBI" id="CHEBI:17775"/>
    </ligand>
</feature>
<feature type="modified residue" description="N-acetylalanine" evidence="2">
    <location>
        <position position="2"/>
    </location>
</feature>
<feature type="modified residue" description="N6-acetyllysine; alternate" evidence="2">
    <location>
        <position position="6"/>
    </location>
</feature>
<feature type="modified residue" description="N6-succinyllysine; alternate" evidence="2">
    <location>
        <position position="6"/>
    </location>
</feature>
<feature type="modified residue" description="N6-acetyllysine; alternate" evidence="2">
    <location>
        <position position="19"/>
    </location>
</feature>
<feature type="modified residue" description="N6-succinyllysine; alternate" evidence="2">
    <location>
        <position position="19"/>
    </location>
</feature>
<feature type="modified residue" description="N6-acetyllysine" evidence="2">
    <location>
        <position position="23"/>
    </location>
</feature>
<feature type="modified residue" description="N6-acetyllysine" evidence="2">
    <location>
        <position position="32"/>
    </location>
</feature>
<feature type="modified residue" description="Phosphoserine" evidence="2">
    <location>
        <position position="35"/>
    </location>
</feature>
<feature type="modified residue" description="Phosphoserine" evidence="2">
    <location>
        <position position="59"/>
    </location>
</feature>
<feature type="modified residue" description="N6-acetyllysine" evidence="2">
    <location>
        <position position="114"/>
    </location>
</feature>
<feature type="modified residue" description="N6-acetyllysine" evidence="2">
    <location>
        <position position="118"/>
    </location>
</feature>
<feature type="modified residue" description="N6-acetyllysine" evidence="2">
    <location>
        <position position="160"/>
    </location>
</feature>
<feature type="modified residue" description="N6-acetyllysine" evidence="2">
    <location>
        <position position="171"/>
    </location>
</feature>
<feature type="modified residue" description="N6-acetyllysine" evidence="2">
    <location>
        <position position="181"/>
    </location>
</feature>
<feature type="modified residue" description="N6-acetyllysine; alternate" evidence="2">
    <location>
        <position position="217"/>
    </location>
</feature>
<feature type="modified residue" description="N6-succinyllysine; alternate" evidence="2">
    <location>
        <position position="217"/>
    </location>
</feature>
<feature type="modified residue" description="N6-acetyllysine; alternate" evidence="2">
    <location>
        <position position="224"/>
    </location>
</feature>
<feature type="modified residue" description="N6-succinyllysine; alternate" evidence="2">
    <location>
        <position position="224"/>
    </location>
</feature>
<feature type="modified residue" description="Phosphoserine" evidence="2">
    <location>
        <position position="228"/>
    </location>
</feature>
<feature type="modified residue" description="N6-acetyllysine" evidence="2">
    <location>
        <position position="274"/>
    </location>
</feature>
<feature type="modified residue" description="Phosphotyrosine" evidence="2">
    <location>
        <position position="285"/>
    </location>
</feature>
<accession>P11645</accession>
<sequence length="300" mass="34501">MATTKKNEDVEFVRTGYGKDMVKVLHIQRDGKYHSIKEVATSVQLTLSSKQDYVYGDNSDIIPTDTIKNTVHVLAKFKGIKSIEVFAMNICEHFLSSFNHVVRVHVYVEEVPWKRLEKNGVQHVHAFIHTPTGTHFCEVEQRRSGLPVIHSGIKDLKVLKTTQSGFEGFIKDQFTTLPEVKDRCFATQVYCKWRYQHSQDVDFEATWDIVRDTVLEKFAGPYDKGEYSPSVQKTLYDIQVLTLSRVPQIEDMEISLPNIHYFNIDMSKMGLINKEEVLLPLDNPYGKITGTVKRKLSSRL</sequence>